<reference key="1">
    <citation type="submission" date="2002-12" db="EMBL/GenBank/DDBJ databases">
        <title>Complete genome sequence of Vibrio vulnificus CMCP6.</title>
        <authorList>
            <person name="Rhee J.H."/>
            <person name="Kim S.Y."/>
            <person name="Chung S.S."/>
            <person name="Kim J.J."/>
            <person name="Moon Y.H."/>
            <person name="Jeong H."/>
            <person name="Choy H.E."/>
        </authorList>
    </citation>
    <scope>NUCLEOTIDE SEQUENCE [LARGE SCALE GENOMIC DNA]</scope>
    <source>
        <strain>CMCP6</strain>
    </source>
</reference>
<accession>Q8DFK5</accession>
<sequence length="669" mass="73535">MSESKQQYLEELKQQLHYHAVRYYVEDNPEIPDAEYDRMMRELMAIEAEHPEWISVDSPSQRVGGVALDSFRQVTHEIPMLSLDNAFSDEELESFLKRAQDRMPSAHIDAFCCEPKLDGLAVSLLYENGVLVQAATRGDGTTGENITENVRTIASVPLKLQGEGWPSRIEVRGEVFMPKAGFEKLNDIARKKGEKVFVNPRNAAAGSLRQLDSKITATRPLAFYAYSVGVVEGISLSSSHYQRFLQLKQWGLPMCPETKLVNGLESVKAFYADILNRRDALPYEIDGVVIKIDDIVIQEKLGFVARAPRWAIAYKFPAQEELTLLNDVEFQVGRTGAITPVAKLEPVFVGGVTVSNATLHNADEIERLGVMVGDTVVIRRAGDVIPQIVSVVKDRRKGDEKNIIFPTACPVCHSHVERIEGEAVTRCSGGLVCQAQRKEALKHFVSRKALDVDGLGDKVIEQLVDKEMVETPADLFTLSAGVLTVLERMGPKSAQNIVNALNVAKETTLARFLYSLGIREVGEATAANLARHFKTLEAIQTATHEQLIEVPDIGEVVARHITAFFAEEKNQRVVQALIEQGIVWPAVEELGSEIPQPLAGKVVVLTGTLTQLSRGDAKAALERLGAKVTGSVSKKTDIVFAGEAAGSKLTKAQELGVEIQTEQDLLALL</sequence>
<dbReference type="EC" id="6.5.1.2" evidence="1"/>
<dbReference type="EMBL" id="AE016795">
    <property type="protein sequence ID" value="AAO08743.1"/>
    <property type="molecule type" value="Genomic_DNA"/>
</dbReference>
<dbReference type="RefSeq" id="WP_011078321.1">
    <property type="nucleotide sequence ID" value="NC_004459.3"/>
</dbReference>
<dbReference type="SMR" id="Q8DFK5"/>
<dbReference type="KEGG" id="vvu:VV1_0206"/>
<dbReference type="HOGENOM" id="CLU_007764_2_1_6"/>
<dbReference type="Proteomes" id="UP000002275">
    <property type="component" value="Chromosome 1"/>
</dbReference>
<dbReference type="GO" id="GO:0005829">
    <property type="term" value="C:cytosol"/>
    <property type="evidence" value="ECO:0007669"/>
    <property type="project" value="TreeGrafter"/>
</dbReference>
<dbReference type="GO" id="GO:0003677">
    <property type="term" value="F:DNA binding"/>
    <property type="evidence" value="ECO:0007669"/>
    <property type="project" value="InterPro"/>
</dbReference>
<dbReference type="GO" id="GO:0003911">
    <property type="term" value="F:DNA ligase (NAD+) activity"/>
    <property type="evidence" value="ECO:0007669"/>
    <property type="project" value="UniProtKB-UniRule"/>
</dbReference>
<dbReference type="GO" id="GO:0046872">
    <property type="term" value="F:metal ion binding"/>
    <property type="evidence" value="ECO:0007669"/>
    <property type="project" value="UniProtKB-KW"/>
</dbReference>
<dbReference type="GO" id="GO:0006281">
    <property type="term" value="P:DNA repair"/>
    <property type="evidence" value="ECO:0007669"/>
    <property type="project" value="UniProtKB-KW"/>
</dbReference>
<dbReference type="GO" id="GO:0006260">
    <property type="term" value="P:DNA replication"/>
    <property type="evidence" value="ECO:0007669"/>
    <property type="project" value="UniProtKB-KW"/>
</dbReference>
<dbReference type="CDD" id="cd17748">
    <property type="entry name" value="BRCT_DNA_ligase_like"/>
    <property type="match status" value="1"/>
</dbReference>
<dbReference type="CDD" id="cd00114">
    <property type="entry name" value="LIGANc"/>
    <property type="match status" value="1"/>
</dbReference>
<dbReference type="FunFam" id="1.10.150.20:FF:000006">
    <property type="entry name" value="DNA ligase"/>
    <property type="match status" value="1"/>
</dbReference>
<dbReference type="FunFam" id="1.10.150.20:FF:000007">
    <property type="entry name" value="DNA ligase"/>
    <property type="match status" value="1"/>
</dbReference>
<dbReference type="FunFam" id="1.10.287.610:FF:000002">
    <property type="entry name" value="DNA ligase"/>
    <property type="match status" value="1"/>
</dbReference>
<dbReference type="FunFam" id="2.40.50.140:FF:000012">
    <property type="entry name" value="DNA ligase"/>
    <property type="match status" value="1"/>
</dbReference>
<dbReference type="FunFam" id="3.30.470.30:FF:000001">
    <property type="entry name" value="DNA ligase"/>
    <property type="match status" value="1"/>
</dbReference>
<dbReference type="Gene3D" id="6.20.10.30">
    <property type="match status" value="1"/>
</dbReference>
<dbReference type="Gene3D" id="1.10.150.20">
    <property type="entry name" value="5' to 3' exonuclease, C-terminal subdomain"/>
    <property type="match status" value="2"/>
</dbReference>
<dbReference type="Gene3D" id="3.40.50.10190">
    <property type="entry name" value="BRCT domain"/>
    <property type="match status" value="1"/>
</dbReference>
<dbReference type="Gene3D" id="3.30.470.30">
    <property type="entry name" value="DNA ligase/mRNA capping enzyme"/>
    <property type="match status" value="1"/>
</dbReference>
<dbReference type="Gene3D" id="1.10.287.610">
    <property type="entry name" value="Helix hairpin bin"/>
    <property type="match status" value="1"/>
</dbReference>
<dbReference type="Gene3D" id="2.40.50.140">
    <property type="entry name" value="Nucleic acid-binding proteins"/>
    <property type="match status" value="1"/>
</dbReference>
<dbReference type="HAMAP" id="MF_01588">
    <property type="entry name" value="DNA_ligase_A"/>
    <property type="match status" value="1"/>
</dbReference>
<dbReference type="InterPro" id="IPR001357">
    <property type="entry name" value="BRCT_dom"/>
</dbReference>
<dbReference type="InterPro" id="IPR036420">
    <property type="entry name" value="BRCT_dom_sf"/>
</dbReference>
<dbReference type="InterPro" id="IPR041663">
    <property type="entry name" value="DisA/LigA_HHH"/>
</dbReference>
<dbReference type="InterPro" id="IPR001679">
    <property type="entry name" value="DNA_ligase"/>
</dbReference>
<dbReference type="InterPro" id="IPR018239">
    <property type="entry name" value="DNA_ligase_AS"/>
</dbReference>
<dbReference type="InterPro" id="IPR033136">
    <property type="entry name" value="DNA_ligase_CS"/>
</dbReference>
<dbReference type="InterPro" id="IPR013839">
    <property type="entry name" value="DNAligase_adenylation"/>
</dbReference>
<dbReference type="InterPro" id="IPR013840">
    <property type="entry name" value="DNAligase_N"/>
</dbReference>
<dbReference type="InterPro" id="IPR003583">
    <property type="entry name" value="Hlx-hairpin-Hlx_DNA-bd_motif"/>
</dbReference>
<dbReference type="InterPro" id="IPR012340">
    <property type="entry name" value="NA-bd_OB-fold"/>
</dbReference>
<dbReference type="InterPro" id="IPR004150">
    <property type="entry name" value="NAD_DNA_ligase_OB"/>
</dbReference>
<dbReference type="InterPro" id="IPR010994">
    <property type="entry name" value="RuvA_2-like"/>
</dbReference>
<dbReference type="InterPro" id="IPR004149">
    <property type="entry name" value="Znf_DNAligase_C4"/>
</dbReference>
<dbReference type="NCBIfam" id="TIGR00575">
    <property type="entry name" value="dnlj"/>
    <property type="match status" value="1"/>
</dbReference>
<dbReference type="NCBIfam" id="NF005932">
    <property type="entry name" value="PRK07956.1"/>
    <property type="match status" value="1"/>
</dbReference>
<dbReference type="PANTHER" id="PTHR23389">
    <property type="entry name" value="CHROMOSOME TRANSMISSION FIDELITY FACTOR 18"/>
    <property type="match status" value="1"/>
</dbReference>
<dbReference type="PANTHER" id="PTHR23389:SF9">
    <property type="entry name" value="DNA LIGASE"/>
    <property type="match status" value="1"/>
</dbReference>
<dbReference type="Pfam" id="PF00533">
    <property type="entry name" value="BRCT"/>
    <property type="match status" value="1"/>
</dbReference>
<dbReference type="Pfam" id="PF01653">
    <property type="entry name" value="DNA_ligase_aden"/>
    <property type="match status" value="1"/>
</dbReference>
<dbReference type="Pfam" id="PF03120">
    <property type="entry name" value="DNA_ligase_OB"/>
    <property type="match status" value="1"/>
</dbReference>
<dbReference type="Pfam" id="PF03119">
    <property type="entry name" value="DNA_ligase_ZBD"/>
    <property type="match status" value="1"/>
</dbReference>
<dbReference type="Pfam" id="PF12826">
    <property type="entry name" value="HHH_2"/>
    <property type="match status" value="1"/>
</dbReference>
<dbReference type="Pfam" id="PF14520">
    <property type="entry name" value="HHH_5"/>
    <property type="match status" value="1"/>
</dbReference>
<dbReference type="Pfam" id="PF22745">
    <property type="entry name" value="Nlig-Ia"/>
    <property type="match status" value="1"/>
</dbReference>
<dbReference type="PIRSF" id="PIRSF001604">
    <property type="entry name" value="LigA"/>
    <property type="match status" value="1"/>
</dbReference>
<dbReference type="SMART" id="SM00292">
    <property type="entry name" value="BRCT"/>
    <property type="match status" value="1"/>
</dbReference>
<dbReference type="SMART" id="SM00278">
    <property type="entry name" value="HhH1"/>
    <property type="match status" value="3"/>
</dbReference>
<dbReference type="SMART" id="SM00532">
    <property type="entry name" value="LIGANc"/>
    <property type="match status" value="1"/>
</dbReference>
<dbReference type="SUPFAM" id="SSF52113">
    <property type="entry name" value="BRCT domain"/>
    <property type="match status" value="1"/>
</dbReference>
<dbReference type="SUPFAM" id="SSF56091">
    <property type="entry name" value="DNA ligase/mRNA capping enzyme, catalytic domain"/>
    <property type="match status" value="1"/>
</dbReference>
<dbReference type="SUPFAM" id="SSF50249">
    <property type="entry name" value="Nucleic acid-binding proteins"/>
    <property type="match status" value="1"/>
</dbReference>
<dbReference type="SUPFAM" id="SSF47781">
    <property type="entry name" value="RuvA domain 2-like"/>
    <property type="match status" value="1"/>
</dbReference>
<dbReference type="PROSITE" id="PS50172">
    <property type="entry name" value="BRCT"/>
    <property type="match status" value="1"/>
</dbReference>
<dbReference type="PROSITE" id="PS01055">
    <property type="entry name" value="DNA_LIGASE_N1"/>
    <property type="match status" value="1"/>
</dbReference>
<dbReference type="PROSITE" id="PS01056">
    <property type="entry name" value="DNA_LIGASE_N2"/>
    <property type="match status" value="1"/>
</dbReference>
<name>DNLJ_VIBVU</name>
<feature type="chain" id="PRO_0000313508" description="DNA ligase">
    <location>
        <begin position="1"/>
        <end position="669"/>
    </location>
</feature>
<feature type="domain" description="BRCT" evidence="1">
    <location>
        <begin position="593"/>
        <end position="669"/>
    </location>
</feature>
<feature type="active site" description="N6-AMP-lysine intermediate" evidence="1">
    <location>
        <position position="116"/>
    </location>
</feature>
<feature type="binding site" evidence="1">
    <location>
        <begin position="33"/>
        <end position="37"/>
    </location>
    <ligand>
        <name>NAD(+)</name>
        <dbReference type="ChEBI" id="CHEBI:57540"/>
    </ligand>
</feature>
<feature type="binding site" evidence="1">
    <location>
        <begin position="82"/>
        <end position="83"/>
    </location>
    <ligand>
        <name>NAD(+)</name>
        <dbReference type="ChEBI" id="CHEBI:57540"/>
    </ligand>
</feature>
<feature type="binding site" evidence="1">
    <location>
        <position position="114"/>
    </location>
    <ligand>
        <name>NAD(+)</name>
        <dbReference type="ChEBI" id="CHEBI:57540"/>
    </ligand>
</feature>
<feature type="binding site" evidence="1">
    <location>
        <position position="137"/>
    </location>
    <ligand>
        <name>NAD(+)</name>
        <dbReference type="ChEBI" id="CHEBI:57540"/>
    </ligand>
</feature>
<feature type="binding site" evidence="1">
    <location>
        <position position="174"/>
    </location>
    <ligand>
        <name>NAD(+)</name>
        <dbReference type="ChEBI" id="CHEBI:57540"/>
    </ligand>
</feature>
<feature type="binding site" evidence="1">
    <location>
        <position position="291"/>
    </location>
    <ligand>
        <name>NAD(+)</name>
        <dbReference type="ChEBI" id="CHEBI:57540"/>
    </ligand>
</feature>
<feature type="binding site" evidence="1">
    <location>
        <position position="315"/>
    </location>
    <ligand>
        <name>NAD(+)</name>
        <dbReference type="ChEBI" id="CHEBI:57540"/>
    </ligand>
</feature>
<feature type="binding site" evidence="1">
    <location>
        <position position="409"/>
    </location>
    <ligand>
        <name>Zn(2+)</name>
        <dbReference type="ChEBI" id="CHEBI:29105"/>
    </ligand>
</feature>
<feature type="binding site" evidence="1">
    <location>
        <position position="412"/>
    </location>
    <ligand>
        <name>Zn(2+)</name>
        <dbReference type="ChEBI" id="CHEBI:29105"/>
    </ligand>
</feature>
<feature type="binding site" evidence="1">
    <location>
        <position position="427"/>
    </location>
    <ligand>
        <name>Zn(2+)</name>
        <dbReference type="ChEBI" id="CHEBI:29105"/>
    </ligand>
</feature>
<feature type="binding site" evidence="1">
    <location>
        <position position="433"/>
    </location>
    <ligand>
        <name>Zn(2+)</name>
        <dbReference type="ChEBI" id="CHEBI:29105"/>
    </ligand>
</feature>
<comment type="function">
    <text evidence="1">DNA ligase that catalyzes the formation of phosphodiester linkages between 5'-phosphoryl and 3'-hydroxyl groups in double-stranded DNA using NAD as a coenzyme and as the energy source for the reaction. It is essential for DNA replication and repair of damaged DNA.</text>
</comment>
<comment type="catalytic activity">
    <reaction evidence="1">
        <text>NAD(+) + (deoxyribonucleotide)n-3'-hydroxyl + 5'-phospho-(deoxyribonucleotide)m = (deoxyribonucleotide)n+m + AMP + beta-nicotinamide D-nucleotide.</text>
        <dbReference type="EC" id="6.5.1.2"/>
    </reaction>
</comment>
<comment type="cofactor">
    <cofactor evidence="1">
        <name>Mg(2+)</name>
        <dbReference type="ChEBI" id="CHEBI:18420"/>
    </cofactor>
    <cofactor evidence="1">
        <name>Mn(2+)</name>
        <dbReference type="ChEBI" id="CHEBI:29035"/>
    </cofactor>
</comment>
<comment type="similarity">
    <text evidence="1">Belongs to the NAD-dependent DNA ligase family. LigA subfamily.</text>
</comment>
<organism>
    <name type="scientific">Vibrio vulnificus (strain CMCP6)</name>
    <dbReference type="NCBI Taxonomy" id="216895"/>
    <lineage>
        <taxon>Bacteria</taxon>
        <taxon>Pseudomonadati</taxon>
        <taxon>Pseudomonadota</taxon>
        <taxon>Gammaproteobacteria</taxon>
        <taxon>Vibrionales</taxon>
        <taxon>Vibrionaceae</taxon>
        <taxon>Vibrio</taxon>
    </lineage>
</organism>
<proteinExistence type="inferred from homology"/>
<keyword id="KW-0227">DNA damage</keyword>
<keyword id="KW-0234">DNA repair</keyword>
<keyword id="KW-0235">DNA replication</keyword>
<keyword id="KW-0436">Ligase</keyword>
<keyword id="KW-0460">Magnesium</keyword>
<keyword id="KW-0464">Manganese</keyword>
<keyword id="KW-0479">Metal-binding</keyword>
<keyword id="KW-0520">NAD</keyword>
<keyword id="KW-0862">Zinc</keyword>
<protein>
    <recommendedName>
        <fullName evidence="1">DNA ligase</fullName>
        <ecNumber evidence="1">6.5.1.2</ecNumber>
    </recommendedName>
    <alternativeName>
        <fullName evidence="1">Polydeoxyribonucleotide synthase [NAD(+)]</fullName>
    </alternativeName>
</protein>
<evidence type="ECO:0000255" key="1">
    <source>
        <dbReference type="HAMAP-Rule" id="MF_01588"/>
    </source>
</evidence>
<gene>
    <name evidence="1" type="primary">ligA</name>
    <name type="ordered locus">VV1_0206</name>
</gene>